<evidence type="ECO:0000250" key="1"/>
<organism>
    <name type="scientific">Mycobacterium tuberculosis (strain CDC 1551 / Oshkosh)</name>
    <dbReference type="NCBI Taxonomy" id="83331"/>
    <lineage>
        <taxon>Bacteria</taxon>
        <taxon>Bacillati</taxon>
        <taxon>Actinomycetota</taxon>
        <taxon>Actinomycetes</taxon>
        <taxon>Mycobacteriales</taxon>
        <taxon>Mycobacteriaceae</taxon>
        <taxon>Mycobacterium</taxon>
        <taxon>Mycobacterium tuberculosis complex</taxon>
    </lineage>
</organism>
<gene>
    <name type="primary">vapB3</name>
    <name type="ordered locus">MT0575</name>
</gene>
<dbReference type="EMBL" id="AE000516">
    <property type="protein sequence ID" value="AAK44798.1"/>
    <property type="molecule type" value="Genomic_DNA"/>
</dbReference>
<dbReference type="PIR" id="A70548">
    <property type="entry name" value="A70548"/>
</dbReference>
<dbReference type="RefSeq" id="WP_003402915.1">
    <property type="nucleotide sequence ID" value="NZ_KK341227.1"/>
</dbReference>
<dbReference type="KEGG" id="mtc:MT0575"/>
<dbReference type="PATRIC" id="fig|83331.31.peg.606"/>
<dbReference type="HOGENOM" id="CLU_2718084_0_0_11"/>
<dbReference type="Proteomes" id="UP000001020">
    <property type="component" value="Chromosome"/>
</dbReference>
<dbReference type="InterPro" id="IPR009956">
    <property type="entry name" value="Post-segregation_anti-tox_CcdA"/>
</dbReference>
<dbReference type="Pfam" id="PF07362">
    <property type="entry name" value="CcdA"/>
    <property type="match status" value="1"/>
</dbReference>
<proteinExistence type="inferred from homology"/>
<accession>P9WJ58</accession>
<accession>L0T6U4</accession>
<accession>O06416</accession>
<accession>Q7D9N5</accession>
<protein>
    <recommendedName>
        <fullName>Antitoxin VapB3</fullName>
    </recommendedName>
</protein>
<name>VAPB3_MYCTO</name>
<keyword id="KW-1185">Reference proteome</keyword>
<keyword id="KW-1277">Toxin-antitoxin system</keyword>
<feature type="chain" id="PRO_0000427887" description="Antitoxin VapB3">
    <location>
        <begin position="1"/>
        <end position="88"/>
    </location>
</feature>
<comment type="function">
    <text evidence="1">Antitoxin component of a type II toxin-antitoxin (TA) system.</text>
</comment>
<reference key="1">
    <citation type="journal article" date="2002" name="J. Bacteriol.">
        <title>Whole-genome comparison of Mycobacterium tuberculosis clinical and laboratory strains.</title>
        <authorList>
            <person name="Fleischmann R.D."/>
            <person name="Alland D."/>
            <person name="Eisen J.A."/>
            <person name="Carpenter L."/>
            <person name="White O."/>
            <person name="Peterson J.D."/>
            <person name="DeBoy R.T."/>
            <person name="Dodson R.J."/>
            <person name="Gwinn M.L."/>
            <person name="Haft D.H."/>
            <person name="Hickey E.K."/>
            <person name="Kolonay J.F."/>
            <person name="Nelson W.C."/>
            <person name="Umayam L.A."/>
            <person name="Ermolaeva M.D."/>
            <person name="Salzberg S.L."/>
            <person name="Delcher A."/>
            <person name="Utterback T.R."/>
            <person name="Weidman J.F."/>
            <person name="Khouri H.M."/>
            <person name="Gill J."/>
            <person name="Mikula A."/>
            <person name="Bishai W."/>
            <person name="Jacobs W.R. Jr."/>
            <person name="Venter J.C."/>
            <person name="Fraser C.M."/>
        </authorList>
    </citation>
    <scope>NUCLEOTIDE SEQUENCE [LARGE SCALE GENOMIC DNA]</scope>
    <source>
        <strain>CDC 1551 / Oshkosh</strain>
    </source>
</reference>
<sequence length="88" mass="9544">MLSRRTKTIVVCTLVCMARLNVYVPDELAERARARGLNVSALTQAAISAELENSATDAWLEGLEPRSTGARHDDVLGAIDAARDEFEA</sequence>